<accession>P0AG15</accession>
<accession>P24213</accession>
<accession>P77676</accession>
<proteinExistence type="inferred from homology"/>
<reference key="1">
    <citation type="journal article" date="2002" name="Nucleic Acids Res.">
        <title>Genome sequence of Shigella flexneri 2a: insights into pathogenicity through comparison with genomes of Escherichia coli K12 and O157.</title>
        <authorList>
            <person name="Jin Q."/>
            <person name="Yuan Z."/>
            <person name="Xu J."/>
            <person name="Wang Y."/>
            <person name="Shen Y."/>
            <person name="Lu W."/>
            <person name="Wang J."/>
            <person name="Liu H."/>
            <person name="Yang J."/>
            <person name="Yang F."/>
            <person name="Zhang X."/>
            <person name="Zhang J."/>
            <person name="Yang G."/>
            <person name="Wu H."/>
            <person name="Qu D."/>
            <person name="Dong J."/>
            <person name="Sun L."/>
            <person name="Xue Y."/>
            <person name="Zhao A."/>
            <person name="Gao Y."/>
            <person name="Zhu J."/>
            <person name="Kan B."/>
            <person name="Ding K."/>
            <person name="Chen S."/>
            <person name="Cheng H."/>
            <person name="Yao Z."/>
            <person name="He B."/>
            <person name="Chen R."/>
            <person name="Ma D."/>
            <person name="Qiang B."/>
            <person name="Wen Y."/>
            <person name="Hou Y."/>
            <person name="Yu J."/>
        </authorList>
    </citation>
    <scope>NUCLEOTIDE SEQUENCE [LARGE SCALE GENOMIC DNA]</scope>
    <source>
        <strain>301 / Serotype 2a</strain>
    </source>
</reference>
<reference key="2">
    <citation type="journal article" date="2003" name="Infect. Immun.">
        <title>Complete genome sequence and comparative genomics of Shigella flexneri serotype 2a strain 2457T.</title>
        <authorList>
            <person name="Wei J."/>
            <person name="Goldberg M.B."/>
            <person name="Burland V."/>
            <person name="Venkatesan M.M."/>
            <person name="Deng W."/>
            <person name="Fournier G."/>
            <person name="Mayhew G.F."/>
            <person name="Plunkett G. III"/>
            <person name="Rose D.J."/>
            <person name="Darling A."/>
            <person name="Mau B."/>
            <person name="Perna N.T."/>
            <person name="Payne S.M."/>
            <person name="Runyen-Janecky L.J."/>
            <person name="Zhou S."/>
            <person name="Schwartz D.C."/>
            <person name="Blattner F.R."/>
        </authorList>
    </citation>
    <scope>NUCLEOTIDE SEQUENCE [LARGE SCALE GENOMIC DNA]</scope>
    <source>
        <strain>ATCC 700930 / 2457T / Serotype 2a</strain>
    </source>
</reference>
<gene>
    <name type="primary">sohB</name>
    <name type="ordered locus">SF1274</name>
    <name type="ordered locus">S1359</name>
</gene>
<keyword id="KW-0997">Cell inner membrane</keyword>
<keyword id="KW-1003">Cell membrane</keyword>
<keyword id="KW-0378">Hydrolase</keyword>
<keyword id="KW-0472">Membrane</keyword>
<keyword id="KW-0645">Protease</keyword>
<keyword id="KW-1185">Reference proteome</keyword>
<keyword id="KW-0720">Serine protease</keyword>
<keyword id="KW-0812">Transmembrane</keyword>
<keyword id="KW-1133">Transmembrane helix</keyword>
<protein>
    <recommendedName>
        <fullName>Probable protease SohB</fullName>
        <ecNumber>3.4.21.-</ecNumber>
    </recommendedName>
</protein>
<comment type="function">
    <text evidence="1">Multicopy suppressor of the HtrA (DegP) null phenotype. It is possibly a protease, not essential for bacterial viability (By similarity).</text>
</comment>
<comment type="subcellular location">
    <subcellularLocation>
        <location evidence="1">Cell inner membrane</location>
    </subcellularLocation>
</comment>
<comment type="similarity">
    <text evidence="3">Belongs to the peptidase S49 family.</text>
</comment>
<name>SOHB_SHIFL</name>
<feature type="chain" id="PRO_0000171450" description="Probable protease SohB">
    <location>
        <begin position="1"/>
        <end position="349"/>
    </location>
</feature>
<feature type="topological domain" description="Periplasmic" evidence="2">
    <location>
        <begin position="1"/>
        <end position="8"/>
    </location>
</feature>
<feature type="transmembrane region" description="Helical" evidence="2">
    <location>
        <begin position="9"/>
        <end position="29"/>
    </location>
</feature>
<feature type="topological domain" description="Cytoplasmic" evidence="2">
    <location>
        <begin position="30"/>
        <end position="349"/>
    </location>
</feature>
<feature type="active site" description="Nucleophile" evidence="1">
    <location>
        <position position="178"/>
    </location>
</feature>
<feature type="active site" description="Proton donor/acceptor" evidence="1">
    <location>
        <position position="230"/>
    </location>
</feature>
<evidence type="ECO:0000250" key="1"/>
<evidence type="ECO:0000255" key="2"/>
<evidence type="ECO:0000305" key="3"/>
<organism>
    <name type="scientific">Shigella flexneri</name>
    <dbReference type="NCBI Taxonomy" id="623"/>
    <lineage>
        <taxon>Bacteria</taxon>
        <taxon>Pseudomonadati</taxon>
        <taxon>Pseudomonadota</taxon>
        <taxon>Gammaproteobacteria</taxon>
        <taxon>Enterobacterales</taxon>
        <taxon>Enterobacteriaceae</taxon>
        <taxon>Shigella</taxon>
    </lineage>
</organism>
<sequence>MELLSEYGLFLAKIVTVVLAIAAIAAIIVNVAQRNKRQRGELRVNNLSEQYKEMKEELAAALMDSHQQKQWHKAQKKKHKQEAKAAKAKAKLGEVATDSKPRVWVLDFKGSMDAHEVNSLREEITAVLAAFKPQDQVVLRLESPGGMVHGYGLAASQLQRLRDKNIPLTVTVDKVAASGGYMMACVADKIVSAPFAIVGSIGVVAQMPNFNRFLKSKDIDIELHTAGQYKRTLTLLGENTEEGREKFREELNETHQLFKDFVKRMRPSLDIEQVATGEHWYGQQAVEKGLVDEINTSDEVILSLMEGREVVNVRYMQRKRLIDRFTGSAAESADRLLLRWWQRGQKPLM</sequence>
<dbReference type="EC" id="3.4.21.-"/>
<dbReference type="EMBL" id="AE005674">
    <property type="protein sequence ID" value="AAN42886.1"/>
    <property type="molecule type" value="Genomic_DNA"/>
</dbReference>
<dbReference type="EMBL" id="AE014073">
    <property type="protein sequence ID" value="AAP16772.1"/>
    <property type="molecule type" value="Genomic_DNA"/>
</dbReference>
<dbReference type="RefSeq" id="NP_707179.1">
    <property type="nucleotide sequence ID" value="NC_004337.2"/>
</dbReference>
<dbReference type="RefSeq" id="WP_000422045.1">
    <property type="nucleotide sequence ID" value="NZ_WPGW01000009.1"/>
</dbReference>
<dbReference type="SMR" id="P0AG15"/>
<dbReference type="STRING" id="198214.SF1274"/>
<dbReference type="PaxDb" id="198214-SF1274"/>
<dbReference type="GeneID" id="1024236"/>
<dbReference type="GeneID" id="93775391"/>
<dbReference type="KEGG" id="sfl:SF1274"/>
<dbReference type="KEGG" id="sfx:S1359"/>
<dbReference type="PATRIC" id="fig|198214.7.peg.1495"/>
<dbReference type="HOGENOM" id="CLU_070316_0_0_6"/>
<dbReference type="Proteomes" id="UP000001006">
    <property type="component" value="Chromosome"/>
</dbReference>
<dbReference type="Proteomes" id="UP000002673">
    <property type="component" value="Chromosome"/>
</dbReference>
<dbReference type="GO" id="GO:0005886">
    <property type="term" value="C:plasma membrane"/>
    <property type="evidence" value="ECO:0007669"/>
    <property type="project" value="UniProtKB-SubCell"/>
</dbReference>
<dbReference type="GO" id="GO:0004252">
    <property type="term" value="F:serine-type endopeptidase activity"/>
    <property type="evidence" value="ECO:0007669"/>
    <property type="project" value="InterPro"/>
</dbReference>
<dbReference type="GO" id="GO:0006508">
    <property type="term" value="P:proteolysis"/>
    <property type="evidence" value="ECO:0007669"/>
    <property type="project" value="UniProtKB-KW"/>
</dbReference>
<dbReference type="CDD" id="cd07023">
    <property type="entry name" value="S49_Sppa_N_C"/>
    <property type="match status" value="1"/>
</dbReference>
<dbReference type="Gene3D" id="6.20.330.10">
    <property type="match status" value="1"/>
</dbReference>
<dbReference type="Gene3D" id="3.90.226.10">
    <property type="entry name" value="2-enoyl-CoA Hydratase, Chain A, domain 1"/>
    <property type="match status" value="1"/>
</dbReference>
<dbReference type="InterPro" id="IPR029045">
    <property type="entry name" value="ClpP/crotonase-like_dom_sf"/>
</dbReference>
<dbReference type="InterPro" id="IPR002142">
    <property type="entry name" value="Peptidase_S49"/>
</dbReference>
<dbReference type="InterPro" id="IPR013703">
    <property type="entry name" value="Peptidase_S49_N_proteobac"/>
</dbReference>
<dbReference type="InterPro" id="IPR047272">
    <property type="entry name" value="S49_SppA_C"/>
</dbReference>
<dbReference type="NCBIfam" id="NF008745">
    <property type="entry name" value="PRK11778.1"/>
    <property type="match status" value="1"/>
</dbReference>
<dbReference type="PANTHER" id="PTHR42987">
    <property type="entry name" value="PEPTIDASE S49"/>
    <property type="match status" value="1"/>
</dbReference>
<dbReference type="PANTHER" id="PTHR42987:SF4">
    <property type="entry name" value="PROTEASE SOHB-RELATED"/>
    <property type="match status" value="1"/>
</dbReference>
<dbReference type="Pfam" id="PF01343">
    <property type="entry name" value="Peptidase_S49"/>
    <property type="match status" value="1"/>
</dbReference>
<dbReference type="Pfam" id="PF08496">
    <property type="entry name" value="Peptidase_S49_N"/>
    <property type="match status" value="1"/>
</dbReference>
<dbReference type="SUPFAM" id="SSF52096">
    <property type="entry name" value="ClpP/crotonase"/>
    <property type="match status" value="1"/>
</dbReference>